<organism>
    <name type="scientific">Escherichia coli (strain K12 / MC4100 / BW2952)</name>
    <dbReference type="NCBI Taxonomy" id="595496"/>
    <lineage>
        <taxon>Bacteria</taxon>
        <taxon>Pseudomonadati</taxon>
        <taxon>Pseudomonadota</taxon>
        <taxon>Gammaproteobacteria</taxon>
        <taxon>Enterobacterales</taxon>
        <taxon>Enterobacteriaceae</taxon>
        <taxon>Escherichia</taxon>
    </lineage>
</organism>
<accession>C4ZUA4</accession>
<proteinExistence type="inferred from homology"/>
<evidence type="ECO:0000255" key="1">
    <source>
        <dbReference type="HAMAP-Rule" id="MF_00470"/>
    </source>
</evidence>
<gene>
    <name evidence="1" type="primary">menC</name>
    <name type="ordered locus">BWG_2035</name>
</gene>
<name>MENC_ECOBW</name>
<sequence>MRSAQVYRWQIPMDAGVVLRDRRLKTRDGLYVCLREGEREGWGEISPLPGFSQETWEEAQSVLLAWVNNWLAGDCELPQMPSVAFGVSCALAELTDTLPQAANYRAAPLCNGDPDDLILKLADMPGEKVAKVKVGLYEAVRDGMVVNLLLEAIPDLHLRLDANRAWTPLKGQQFAKYVNPDYRDRIAFLEEPCKTRDDSRAFARETGIAIAWDESLREPDFAFVAEEGVRAVVIKPTLTGSLEKVREQVQAAHALGLTAVISSSIESSLGLTQLARIAAWLTPDTIPGLDTLDLMQAQQVRRWPGSTLPVVEVDALERLL</sequence>
<feature type="chain" id="PRO_1000206345" description="o-succinylbenzoate synthase">
    <location>
        <begin position="1"/>
        <end position="320"/>
    </location>
</feature>
<feature type="active site" description="Proton donor" evidence="1">
    <location>
        <position position="133"/>
    </location>
</feature>
<feature type="active site" description="Proton acceptor" evidence="1">
    <location>
        <position position="235"/>
    </location>
</feature>
<feature type="binding site" evidence="1">
    <location>
        <position position="161"/>
    </location>
    <ligand>
        <name>Mg(2+)</name>
        <dbReference type="ChEBI" id="CHEBI:18420"/>
    </ligand>
</feature>
<feature type="binding site" evidence="1">
    <location>
        <position position="190"/>
    </location>
    <ligand>
        <name>Mg(2+)</name>
        <dbReference type="ChEBI" id="CHEBI:18420"/>
    </ligand>
</feature>
<feature type="binding site" evidence="1">
    <location>
        <position position="213"/>
    </location>
    <ligand>
        <name>Mg(2+)</name>
        <dbReference type="ChEBI" id="CHEBI:18420"/>
    </ligand>
</feature>
<reference key="1">
    <citation type="journal article" date="2009" name="J. Bacteriol.">
        <title>Genomic sequencing reveals regulatory mutations and recombinational events in the widely used MC4100 lineage of Escherichia coli K-12.</title>
        <authorList>
            <person name="Ferenci T."/>
            <person name="Zhou Z."/>
            <person name="Betteridge T."/>
            <person name="Ren Y."/>
            <person name="Liu Y."/>
            <person name="Feng L."/>
            <person name="Reeves P.R."/>
            <person name="Wang L."/>
        </authorList>
    </citation>
    <scope>NUCLEOTIDE SEQUENCE [LARGE SCALE GENOMIC DNA]</scope>
    <source>
        <strain>K12 / MC4100 / BW2952</strain>
    </source>
</reference>
<dbReference type="EC" id="4.2.1.113" evidence="1"/>
<dbReference type="EMBL" id="CP001396">
    <property type="protein sequence ID" value="ACR63944.1"/>
    <property type="molecule type" value="Genomic_DNA"/>
</dbReference>
<dbReference type="RefSeq" id="WP_001255628.1">
    <property type="nucleotide sequence ID" value="NC_012759.1"/>
</dbReference>
<dbReference type="SMR" id="C4ZUA4"/>
<dbReference type="KEGG" id="ebw:BWG_2035"/>
<dbReference type="HOGENOM" id="CLU_030273_0_1_6"/>
<dbReference type="UniPathway" id="UPA00079"/>
<dbReference type="UniPathway" id="UPA01057">
    <property type="reaction ID" value="UER00165"/>
</dbReference>
<dbReference type="GO" id="GO:0000287">
    <property type="term" value="F:magnesium ion binding"/>
    <property type="evidence" value="ECO:0007669"/>
    <property type="project" value="UniProtKB-UniRule"/>
</dbReference>
<dbReference type="GO" id="GO:0043748">
    <property type="term" value="F:O-succinylbenzoate synthase activity"/>
    <property type="evidence" value="ECO:0007669"/>
    <property type="project" value="UniProtKB-EC"/>
</dbReference>
<dbReference type="GO" id="GO:0009234">
    <property type="term" value="P:menaquinone biosynthetic process"/>
    <property type="evidence" value="ECO:0007669"/>
    <property type="project" value="UniProtKB-UniRule"/>
</dbReference>
<dbReference type="CDD" id="cd03320">
    <property type="entry name" value="OSBS"/>
    <property type="match status" value="1"/>
</dbReference>
<dbReference type="FunFam" id="3.20.20.120:FF:000006">
    <property type="entry name" value="o-succinylbenzoate synthase"/>
    <property type="match status" value="1"/>
</dbReference>
<dbReference type="FunFam" id="3.30.390.10:FF:000005">
    <property type="entry name" value="o-succinylbenzoate synthase"/>
    <property type="match status" value="1"/>
</dbReference>
<dbReference type="Gene3D" id="3.20.20.120">
    <property type="entry name" value="Enolase-like C-terminal domain"/>
    <property type="match status" value="1"/>
</dbReference>
<dbReference type="Gene3D" id="3.30.390.10">
    <property type="entry name" value="Enolase-like, N-terminal domain"/>
    <property type="match status" value="1"/>
</dbReference>
<dbReference type="HAMAP" id="MF_00470">
    <property type="entry name" value="MenC_1"/>
    <property type="match status" value="1"/>
</dbReference>
<dbReference type="InterPro" id="IPR036849">
    <property type="entry name" value="Enolase-like_C_sf"/>
</dbReference>
<dbReference type="InterPro" id="IPR029017">
    <property type="entry name" value="Enolase-like_N"/>
</dbReference>
<dbReference type="InterPro" id="IPR029065">
    <property type="entry name" value="Enolase_C-like"/>
</dbReference>
<dbReference type="InterPro" id="IPR013342">
    <property type="entry name" value="Mandelate_racemase_C"/>
</dbReference>
<dbReference type="InterPro" id="IPR010196">
    <property type="entry name" value="OSB_synthase_MenC1"/>
</dbReference>
<dbReference type="InterPro" id="IPR041338">
    <property type="entry name" value="OSBS_N"/>
</dbReference>
<dbReference type="NCBIfam" id="TIGR01927">
    <property type="entry name" value="menC_gam_Gplu"/>
    <property type="match status" value="1"/>
</dbReference>
<dbReference type="NCBIfam" id="NF003473">
    <property type="entry name" value="PRK05105.1"/>
    <property type="match status" value="1"/>
</dbReference>
<dbReference type="PANTHER" id="PTHR48073:SF2">
    <property type="entry name" value="O-SUCCINYLBENZOATE SYNTHASE"/>
    <property type="match status" value="1"/>
</dbReference>
<dbReference type="PANTHER" id="PTHR48073">
    <property type="entry name" value="O-SUCCINYLBENZOATE SYNTHASE-RELATED"/>
    <property type="match status" value="1"/>
</dbReference>
<dbReference type="Pfam" id="PF21508">
    <property type="entry name" value="MenC_N"/>
    <property type="match status" value="1"/>
</dbReference>
<dbReference type="Pfam" id="PF13378">
    <property type="entry name" value="MR_MLE_C"/>
    <property type="match status" value="1"/>
</dbReference>
<dbReference type="SFLD" id="SFLDG00180">
    <property type="entry name" value="muconate_cycloisomerase"/>
    <property type="match status" value="1"/>
</dbReference>
<dbReference type="SFLD" id="SFLDF00009">
    <property type="entry name" value="o-succinylbenzoate_synthase"/>
    <property type="match status" value="1"/>
</dbReference>
<dbReference type="SMART" id="SM00922">
    <property type="entry name" value="MR_MLE"/>
    <property type="match status" value="1"/>
</dbReference>
<dbReference type="SUPFAM" id="SSF51604">
    <property type="entry name" value="Enolase C-terminal domain-like"/>
    <property type="match status" value="1"/>
</dbReference>
<dbReference type="SUPFAM" id="SSF54826">
    <property type="entry name" value="Enolase N-terminal domain-like"/>
    <property type="match status" value="1"/>
</dbReference>
<keyword id="KW-0456">Lyase</keyword>
<keyword id="KW-0460">Magnesium</keyword>
<keyword id="KW-0474">Menaquinone biosynthesis</keyword>
<keyword id="KW-0479">Metal-binding</keyword>
<comment type="function">
    <text evidence="1">Converts 2-succinyl-6-hydroxy-2,4-cyclohexadiene-1-carboxylate (SHCHC) to 2-succinylbenzoate (OSB).</text>
</comment>
<comment type="catalytic activity">
    <reaction evidence="1">
        <text>(1R,6R)-6-hydroxy-2-succinyl-cyclohexa-2,4-diene-1-carboxylate = 2-succinylbenzoate + H2O</text>
        <dbReference type="Rhea" id="RHEA:10196"/>
        <dbReference type="ChEBI" id="CHEBI:15377"/>
        <dbReference type="ChEBI" id="CHEBI:18325"/>
        <dbReference type="ChEBI" id="CHEBI:58689"/>
        <dbReference type="EC" id="4.2.1.113"/>
    </reaction>
</comment>
<comment type="cofactor">
    <cofactor evidence="1">
        <name>a divalent metal cation</name>
        <dbReference type="ChEBI" id="CHEBI:60240"/>
    </cofactor>
</comment>
<comment type="pathway">
    <text evidence="1">Quinol/quinone metabolism; 1,4-dihydroxy-2-naphthoate biosynthesis; 1,4-dihydroxy-2-naphthoate from chorismate: step 4/7.</text>
</comment>
<comment type="pathway">
    <text evidence="1">Quinol/quinone metabolism; menaquinone biosynthesis.</text>
</comment>
<comment type="similarity">
    <text evidence="1">Belongs to the mandelate racemase/muconate lactonizing enzyme family. MenC type 1 subfamily.</text>
</comment>
<protein>
    <recommendedName>
        <fullName evidence="1">o-succinylbenzoate synthase</fullName>
        <shortName evidence="1">OSB synthase</shortName>
        <shortName evidence="1">OSBS</shortName>
        <ecNumber evidence="1">4.2.1.113</ecNumber>
    </recommendedName>
    <alternativeName>
        <fullName evidence="1">4-(2'-carboxyphenyl)-4-oxybutyric acid synthase</fullName>
    </alternativeName>
    <alternativeName>
        <fullName evidence="1">o-succinylbenzoic acid synthase</fullName>
    </alternativeName>
</protein>